<organism>
    <name type="scientific">Bacillus cereus (strain Q1)</name>
    <dbReference type="NCBI Taxonomy" id="361100"/>
    <lineage>
        <taxon>Bacteria</taxon>
        <taxon>Bacillati</taxon>
        <taxon>Bacillota</taxon>
        <taxon>Bacilli</taxon>
        <taxon>Bacillales</taxon>
        <taxon>Bacillaceae</taxon>
        <taxon>Bacillus</taxon>
        <taxon>Bacillus cereus group</taxon>
    </lineage>
</organism>
<accession>B9IT46</accession>
<reference key="1">
    <citation type="journal article" date="2009" name="J. Bacteriol.">
        <title>Complete genome sequence of the extremophilic Bacillus cereus strain Q1 with industrial applications.</title>
        <authorList>
            <person name="Xiong Z."/>
            <person name="Jiang Y."/>
            <person name="Qi D."/>
            <person name="Lu H."/>
            <person name="Yang F."/>
            <person name="Yang J."/>
            <person name="Chen L."/>
            <person name="Sun L."/>
            <person name="Xu X."/>
            <person name="Xue Y."/>
            <person name="Zhu Y."/>
            <person name="Jin Q."/>
        </authorList>
    </citation>
    <scope>NUCLEOTIDE SEQUENCE [LARGE SCALE GENOMIC DNA]</scope>
    <source>
        <strain>Q1</strain>
    </source>
</reference>
<dbReference type="EMBL" id="CP000227">
    <property type="protein sequence ID" value="ACM15734.1"/>
    <property type="molecule type" value="Genomic_DNA"/>
</dbReference>
<dbReference type="SMR" id="B9IT46"/>
<dbReference type="KEGG" id="bcq:BCQ_5338"/>
<dbReference type="HOGENOM" id="CLU_129938_2_0_9"/>
<dbReference type="Proteomes" id="UP000000441">
    <property type="component" value="Chromosome"/>
</dbReference>
<dbReference type="GO" id="GO:1990904">
    <property type="term" value="C:ribonucleoprotein complex"/>
    <property type="evidence" value="ECO:0007669"/>
    <property type="project" value="UniProtKB-KW"/>
</dbReference>
<dbReference type="GO" id="GO:0005840">
    <property type="term" value="C:ribosome"/>
    <property type="evidence" value="ECO:0007669"/>
    <property type="project" value="UniProtKB-KW"/>
</dbReference>
<dbReference type="GO" id="GO:0003735">
    <property type="term" value="F:structural constituent of ribosome"/>
    <property type="evidence" value="ECO:0007669"/>
    <property type="project" value="InterPro"/>
</dbReference>
<dbReference type="GO" id="GO:0006412">
    <property type="term" value="P:translation"/>
    <property type="evidence" value="ECO:0007669"/>
    <property type="project" value="UniProtKB-UniRule"/>
</dbReference>
<dbReference type="FunFam" id="1.10.287.3980:FF:000001">
    <property type="entry name" value="Mitochondrial ribosomal protein L34"/>
    <property type="match status" value="1"/>
</dbReference>
<dbReference type="Gene3D" id="1.10.287.3980">
    <property type="match status" value="1"/>
</dbReference>
<dbReference type="HAMAP" id="MF_00391">
    <property type="entry name" value="Ribosomal_bL34"/>
    <property type="match status" value="1"/>
</dbReference>
<dbReference type="InterPro" id="IPR000271">
    <property type="entry name" value="Ribosomal_bL34"/>
</dbReference>
<dbReference type="InterPro" id="IPR020939">
    <property type="entry name" value="Ribosomal_bL34_CS"/>
</dbReference>
<dbReference type="NCBIfam" id="TIGR01030">
    <property type="entry name" value="rpmH_bact"/>
    <property type="match status" value="1"/>
</dbReference>
<dbReference type="PANTHER" id="PTHR14503:SF4">
    <property type="entry name" value="LARGE RIBOSOMAL SUBUNIT PROTEIN BL34M"/>
    <property type="match status" value="1"/>
</dbReference>
<dbReference type="PANTHER" id="PTHR14503">
    <property type="entry name" value="MITOCHONDRIAL RIBOSOMAL PROTEIN 34 FAMILY MEMBER"/>
    <property type="match status" value="1"/>
</dbReference>
<dbReference type="Pfam" id="PF00468">
    <property type="entry name" value="Ribosomal_L34"/>
    <property type="match status" value="1"/>
</dbReference>
<dbReference type="PROSITE" id="PS00784">
    <property type="entry name" value="RIBOSOMAL_L34"/>
    <property type="match status" value="1"/>
</dbReference>
<gene>
    <name evidence="1" type="primary">rpmH</name>
    <name type="ordered locus">BCQ_5338</name>
</gene>
<feature type="chain" id="PRO_1000134425" description="Large ribosomal subunit protein bL34">
    <location>
        <begin position="1"/>
        <end position="44"/>
    </location>
</feature>
<feature type="region of interest" description="Disordered" evidence="2">
    <location>
        <begin position="1"/>
        <end position="44"/>
    </location>
</feature>
<feature type="compositionally biased region" description="Basic residues" evidence="2">
    <location>
        <begin position="1"/>
        <end position="19"/>
    </location>
</feature>
<feature type="compositionally biased region" description="Basic residues" evidence="2">
    <location>
        <begin position="31"/>
        <end position="44"/>
    </location>
</feature>
<sequence>MKRTYQPNKRKRSKVHGFRSRMSTANGRKVLAARRRKGRKVLSA</sequence>
<comment type="similarity">
    <text evidence="1">Belongs to the bacterial ribosomal protein bL34 family.</text>
</comment>
<name>RL34_BACCQ</name>
<protein>
    <recommendedName>
        <fullName evidence="1">Large ribosomal subunit protein bL34</fullName>
    </recommendedName>
    <alternativeName>
        <fullName evidence="3">50S ribosomal protein L34</fullName>
    </alternativeName>
</protein>
<proteinExistence type="inferred from homology"/>
<keyword id="KW-0687">Ribonucleoprotein</keyword>
<keyword id="KW-0689">Ribosomal protein</keyword>
<evidence type="ECO:0000255" key="1">
    <source>
        <dbReference type="HAMAP-Rule" id="MF_00391"/>
    </source>
</evidence>
<evidence type="ECO:0000256" key="2">
    <source>
        <dbReference type="SAM" id="MobiDB-lite"/>
    </source>
</evidence>
<evidence type="ECO:0000305" key="3"/>